<sequence>MISIDVQHATQFEDLPSLSNIEQWVETALQFIVTDKNKSALTIRFIDKEESTELNEHYRHKKGPTNVLSFPDEPIPGFPSESFGDLAICAPLVAEEAHAQHKTTEAHFAHLITHGFLHLLGYDHVENEDAEEMENLEIKILSQLGFENPYEE</sequence>
<evidence type="ECO:0000255" key="1">
    <source>
        <dbReference type="HAMAP-Rule" id="MF_00009"/>
    </source>
</evidence>
<proteinExistence type="inferred from homology"/>
<protein>
    <recommendedName>
        <fullName evidence="1">Endoribonuclease YbeY</fullName>
        <ecNumber evidence="1">3.1.-.-</ecNumber>
    </recommendedName>
</protein>
<comment type="function">
    <text evidence="1">Single strand-specific metallo-endoribonuclease involved in late-stage 70S ribosome quality control and in maturation of the 3' terminus of the 16S rRNA.</text>
</comment>
<comment type="cofactor">
    <cofactor evidence="1">
        <name>Zn(2+)</name>
        <dbReference type="ChEBI" id="CHEBI:29105"/>
    </cofactor>
    <text evidence="1">Binds 1 zinc ion.</text>
</comment>
<comment type="subcellular location">
    <subcellularLocation>
        <location evidence="1">Cytoplasm</location>
    </subcellularLocation>
</comment>
<comment type="similarity">
    <text evidence="1">Belongs to the endoribonuclease YbeY family.</text>
</comment>
<feature type="chain" id="PRO_1000073901" description="Endoribonuclease YbeY">
    <location>
        <begin position="1"/>
        <end position="152"/>
    </location>
</feature>
<feature type="binding site" evidence="1">
    <location>
        <position position="114"/>
    </location>
    <ligand>
        <name>Zn(2+)</name>
        <dbReference type="ChEBI" id="CHEBI:29105"/>
        <note>catalytic</note>
    </ligand>
</feature>
<feature type="binding site" evidence="1">
    <location>
        <position position="118"/>
    </location>
    <ligand>
        <name>Zn(2+)</name>
        <dbReference type="ChEBI" id="CHEBI:29105"/>
        <note>catalytic</note>
    </ligand>
</feature>
<feature type="binding site" evidence="1">
    <location>
        <position position="124"/>
    </location>
    <ligand>
        <name>Zn(2+)</name>
        <dbReference type="ChEBI" id="CHEBI:29105"/>
        <note>catalytic</note>
    </ligand>
</feature>
<keyword id="KW-0963">Cytoplasm</keyword>
<keyword id="KW-0255">Endonuclease</keyword>
<keyword id="KW-0378">Hydrolase</keyword>
<keyword id="KW-0479">Metal-binding</keyword>
<keyword id="KW-0540">Nuclease</keyword>
<keyword id="KW-0690">Ribosome biogenesis</keyword>
<keyword id="KW-0698">rRNA processing</keyword>
<keyword id="KW-0862">Zinc</keyword>
<accession>A9KCP4</accession>
<organism>
    <name type="scientific">Coxiella burnetii (strain Dugway 5J108-111)</name>
    <dbReference type="NCBI Taxonomy" id="434922"/>
    <lineage>
        <taxon>Bacteria</taxon>
        <taxon>Pseudomonadati</taxon>
        <taxon>Pseudomonadota</taxon>
        <taxon>Gammaproteobacteria</taxon>
        <taxon>Legionellales</taxon>
        <taxon>Coxiellaceae</taxon>
        <taxon>Coxiella</taxon>
    </lineage>
</organism>
<dbReference type="EC" id="3.1.-.-" evidence="1"/>
<dbReference type="EMBL" id="CP000733">
    <property type="protein sequence ID" value="ABS77243.1"/>
    <property type="molecule type" value="Genomic_DNA"/>
</dbReference>
<dbReference type="RefSeq" id="WP_005771102.1">
    <property type="nucleotide sequence ID" value="NC_009727.1"/>
</dbReference>
<dbReference type="SMR" id="A9KCP4"/>
<dbReference type="KEGG" id="cbd:CBUD_1496"/>
<dbReference type="HOGENOM" id="CLU_106710_0_1_6"/>
<dbReference type="Proteomes" id="UP000008555">
    <property type="component" value="Chromosome"/>
</dbReference>
<dbReference type="GO" id="GO:0005737">
    <property type="term" value="C:cytoplasm"/>
    <property type="evidence" value="ECO:0007669"/>
    <property type="project" value="UniProtKB-SubCell"/>
</dbReference>
<dbReference type="GO" id="GO:0004222">
    <property type="term" value="F:metalloendopeptidase activity"/>
    <property type="evidence" value="ECO:0007669"/>
    <property type="project" value="InterPro"/>
</dbReference>
<dbReference type="GO" id="GO:0004521">
    <property type="term" value="F:RNA endonuclease activity"/>
    <property type="evidence" value="ECO:0007669"/>
    <property type="project" value="UniProtKB-UniRule"/>
</dbReference>
<dbReference type="GO" id="GO:0008270">
    <property type="term" value="F:zinc ion binding"/>
    <property type="evidence" value="ECO:0007669"/>
    <property type="project" value="UniProtKB-UniRule"/>
</dbReference>
<dbReference type="GO" id="GO:0006364">
    <property type="term" value="P:rRNA processing"/>
    <property type="evidence" value="ECO:0007669"/>
    <property type="project" value="UniProtKB-UniRule"/>
</dbReference>
<dbReference type="Gene3D" id="3.40.390.30">
    <property type="entry name" value="Metalloproteases ('zincins'), catalytic domain"/>
    <property type="match status" value="1"/>
</dbReference>
<dbReference type="HAMAP" id="MF_00009">
    <property type="entry name" value="Endoribonucl_YbeY"/>
    <property type="match status" value="1"/>
</dbReference>
<dbReference type="InterPro" id="IPR023091">
    <property type="entry name" value="MetalPrtase_cat_dom_sf_prd"/>
</dbReference>
<dbReference type="InterPro" id="IPR002036">
    <property type="entry name" value="YbeY"/>
</dbReference>
<dbReference type="InterPro" id="IPR020549">
    <property type="entry name" value="YbeY_CS"/>
</dbReference>
<dbReference type="NCBIfam" id="TIGR00043">
    <property type="entry name" value="rRNA maturation RNase YbeY"/>
    <property type="match status" value="1"/>
</dbReference>
<dbReference type="PANTHER" id="PTHR46986">
    <property type="entry name" value="ENDORIBONUCLEASE YBEY, CHLOROPLASTIC"/>
    <property type="match status" value="1"/>
</dbReference>
<dbReference type="PANTHER" id="PTHR46986:SF1">
    <property type="entry name" value="ENDORIBONUCLEASE YBEY, CHLOROPLASTIC"/>
    <property type="match status" value="1"/>
</dbReference>
<dbReference type="Pfam" id="PF02130">
    <property type="entry name" value="YbeY"/>
    <property type="match status" value="1"/>
</dbReference>
<dbReference type="SUPFAM" id="SSF55486">
    <property type="entry name" value="Metalloproteases ('zincins'), catalytic domain"/>
    <property type="match status" value="1"/>
</dbReference>
<dbReference type="PROSITE" id="PS01306">
    <property type="entry name" value="UPF0054"/>
    <property type="match status" value="1"/>
</dbReference>
<gene>
    <name evidence="1" type="primary">ybeY</name>
    <name type="ordered locus">CBUD_1496</name>
</gene>
<name>YBEY_COXBN</name>
<reference key="1">
    <citation type="journal article" date="2009" name="Infect. Immun.">
        <title>Comparative genomics reveal extensive transposon-mediated genomic plasticity and diversity among potential effector proteins within the genus Coxiella.</title>
        <authorList>
            <person name="Beare P.A."/>
            <person name="Unsworth N."/>
            <person name="Andoh M."/>
            <person name="Voth D.E."/>
            <person name="Omsland A."/>
            <person name="Gilk S.D."/>
            <person name="Williams K.P."/>
            <person name="Sobral B.W."/>
            <person name="Kupko J.J. III"/>
            <person name="Porcella S.F."/>
            <person name="Samuel J.E."/>
            <person name="Heinzen R.A."/>
        </authorList>
    </citation>
    <scope>NUCLEOTIDE SEQUENCE [LARGE SCALE GENOMIC DNA]</scope>
    <source>
        <strain>Dugway 5J108-111</strain>
    </source>
</reference>